<feature type="chain" id="PRO_1000215266" description="Cation/acetate symporter ActP">
    <location>
        <begin position="1"/>
        <end position="549"/>
    </location>
</feature>
<feature type="transmembrane region" description="Helical" evidence="1">
    <location>
        <begin position="33"/>
        <end position="53"/>
    </location>
</feature>
<feature type="transmembrane region" description="Helical" evidence="1">
    <location>
        <begin position="77"/>
        <end position="97"/>
    </location>
</feature>
<feature type="transmembrane region" description="Helical" evidence="1">
    <location>
        <begin position="103"/>
        <end position="123"/>
    </location>
</feature>
<feature type="transmembrane region" description="Helical" evidence="1">
    <location>
        <begin position="148"/>
        <end position="168"/>
    </location>
</feature>
<feature type="transmembrane region" description="Helical" evidence="1">
    <location>
        <begin position="183"/>
        <end position="203"/>
    </location>
</feature>
<feature type="transmembrane region" description="Helical" evidence="1">
    <location>
        <begin position="206"/>
        <end position="226"/>
    </location>
</feature>
<feature type="transmembrane region" description="Helical" evidence="1">
    <location>
        <begin position="262"/>
        <end position="282"/>
    </location>
</feature>
<feature type="transmembrane region" description="Helical" evidence="1">
    <location>
        <begin position="303"/>
        <end position="323"/>
    </location>
</feature>
<feature type="transmembrane region" description="Helical" evidence="1">
    <location>
        <begin position="355"/>
        <end position="375"/>
    </location>
</feature>
<feature type="transmembrane region" description="Helical" evidence="1">
    <location>
        <begin position="404"/>
        <end position="424"/>
    </location>
</feature>
<feature type="transmembrane region" description="Helical" evidence="1">
    <location>
        <begin position="428"/>
        <end position="448"/>
    </location>
</feature>
<feature type="transmembrane region" description="Helical" evidence="1">
    <location>
        <begin position="464"/>
        <end position="484"/>
    </location>
</feature>
<feature type="transmembrane region" description="Helical" evidence="1">
    <location>
        <begin position="493"/>
        <end position="513"/>
    </location>
</feature>
<protein>
    <recommendedName>
        <fullName evidence="1">Cation/acetate symporter ActP</fullName>
    </recommendedName>
    <alternativeName>
        <fullName evidence="1">Acetate permease</fullName>
    </alternativeName>
    <alternativeName>
        <fullName evidence="1">Acetate transporter ActP</fullName>
    </alternativeName>
</protein>
<proteinExistence type="inferred from homology"/>
<comment type="function">
    <text evidence="1">Transports acetate.</text>
</comment>
<comment type="subcellular location">
    <subcellularLocation>
        <location evidence="1">Cell inner membrane</location>
        <topology evidence="1">Multi-pass membrane protein</topology>
    </subcellularLocation>
</comment>
<comment type="similarity">
    <text evidence="1">Belongs to the sodium:solute symporter (SSF) (TC 2.A.21) family.</text>
</comment>
<sequence>MKRVLTALAATLPFAANAADAISGAVERQPTNWQAIIMFLIFVVFTLGITYWASKRVRSRSDYYTAGGNITGFQNGLAIAGDYMSAASFLGISALVFTSGYDGLIYSLGFLVGWPIILFLIAERLRNLGRYTFADVASYRLKQGPIRILSACGSLVVVALYLIAQMVGAGKLIELLFGLNYHIAVVLVGVLMMMYVLFGGMLATTWVQIIKAVLLLFGASFMAFMVMKHVGFSFNNLFSEAMAVHPKGVDIMKPGGLVKDPISALSLGLGLMFGTAGLPHILMRFFTVSDAREARKSVFYATGFMGYFYILTFIIGFGAIMLVGANPEYKDAAGHLIGGNNMAAVHLANAVGGNLFLGFISAVAFATILAVVAGLTLAGASAVSHDLYANVFKKGATEREELRVSKITVLILGVIAIILGVLFENQNIAFMVGLAFAIAASCNFPIILLSMYWSKLTTRGAMMGGWLGLITAVVLMILGPTIWVQILGHEKAIFPYEYPALFSITVAFLGIWFFSATDNSAEGARERELFRAQFIRSQTGFGVEQGRAH</sequence>
<evidence type="ECO:0000255" key="1">
    <source>
        <dbReference type="HAMAP-Rule" id="MF_01426"/>
    </source>
</evidence>
<accession>C5A160</accession>
<organism>
    <name type="scientific">Escherichia coli (strain K12 / MC4100 / BW2952)</name>
    <dbReference type="NCBI Taxonomy" id="595496"/>
    <lineage>
        <taxon>Bacteria</taxon>
        <taxon>Pseudomonadati</taxon>
        <taxon>Pseudomonadota</taxon>
        <taxon>Gammaproteobacteria</taxon>
        <taxon>Enterobacterales</taxon>
        <taxon>Enterobacteriaceae</taxon>
        <taxon>Escherichia</taxon>
    </lineage>
</organism>
<keyword id="KW-0997">Cell inner membrane</keyword>
<keyword id="KW-1003">Cell membrane</keyword>
<keyword id="KW-0406">Ion transport</keyword>
<keyword id="KW-0472">Membrane</keyword>
<keyword id="KW-0915">Sodium</keyword>
<keyword id="KW-0739">Sodium transport</keyword>
<keyword id="KW-0769">Symport</keyword>
<keyword id="KW-0812">Transmembrane</keyword>
<keyword id="KW-1133">Transmembrane helix</keyword>
<keyword id="KW-0813">Transport</keyword>
<name>ACTP_ECOBW</name>
<gene>
    <name evidence="1" type="primary">actP</name>
    <name type="ordered locus">BWG_3781</name>
</gene>
<dbReference type="EMBL" id="CP001396">
    <property type="protein sequence ID" value="ACR61898.1"/>
    <property type="molecule type" value="Genomic_DNA"/>
</dbReference>
<dbReference type="RefSeq" id="WP_000832573.1">
    <property type="nucleotide sequence ID" value="NC_012759.1"/>
</dbReference>
<dbReference type="SMR" id="C5A160"/>
<dbReference type="KEGG" id="ebw:BWG_3781"/>
<dbReference type="HOGENOM" id="CLU_018808_8_3_6"/>
<dbReference type="GO" id="GO:0005886">
    <property type="term" value="C:plasma membrane"/>
    <property type="evidence" value="ECO:0007669"/>
    <property type="project" value="UniProtKB-SubCell"/>
</dbReference>
<dbReference type="GO" id="GO:0015123">
    <property type="term" value="F:acetate transmembrane transporter activity"/>
    <property type="evidence" value="ECO:0007669"/>
    <property type="project" value="UniProtKB-UniRule"/>
</dbReference>
<dbReference type="GO" id="GO:0043879">
    <property type="term" value="F:glycolate transmembrane transporter activity"/>
    <property type="evidence" value="ECO:0007669"/>
    <property type="project" value="InterPro"/>
</dbReference>
<dbReference type="GO" id="GO:0015293">
    <property type="term" value="F:symporter activity"/>
    <property type="evidence" value="ECO:0007669"/>
    <property type="project" value="UniProtKB-KW"/>
</dbReference>
<dbReference type="GO" id="GO:0006847">
    <property type="term" value="P:plasma membrane acetate transport"/>
    <property type="evidence" value="ECO:0007669"/>
    <property type="project" value="TreeGrafter"/>
</dbReference>
<dbReference type="GO" id="GO:0006814">
    <property type="term" value="P:sodium ion transport"/>
    <property type="evidence" value="ECO:0007669"/>
    <property type="project" value="UniProtKB-KW"/>
</dbReference>
<dbReference type="CDD" id="cd11480">
    <property type="entry name" value="SLC5sbd_u4"/>
    <property type="match status" value="1"/>
</dbReference>
<dbReference type="FunFam" id="1.20.1730.10:FF:000001">
    <property type="entry name" value="Cation/acetate symporter ActP"/>
    <property type="match status" value="1"/>
</dbReference>
<dbReference type="Gene3D" id="1.20.1730.10">
    <property type="entry name" value="Sodium/glucose cotransporter"/>
    <property type="match status" value="1"/>
</dbReference>
<dbReference type="HAMAP" id="MF_01426">
    <property type="entry name" value="Acet_symport_ActP"/>
    <property type="match status" value="1"/>
</dbReference>
<dbReference type="InterPro" id="IPR014083">
    <property type="entry name" value="Cation/Ac_symporter_ActP"/>
</dbReference>
<dbReference type="InterPro" id="IPR038377">
    <property type="entry name" value="Na/Glc_symporter_sf"/>
</dbReference>
<dbReference type="InterPro" id="IPR001734">
    <property type="entry name" value="Na/solute_symporter"/>
</dbReference>
<dbReference type="InterPro" id="IPR018212">
    <property type="entry name" value="Na/solute_symporter_CS"/>
</dbReference>
<dbReference type="InterPro" id="IPR050277">
    <property type="entry name" value="Sodium:Solute_Symporter"/>
</dbReference>
<dbReference type="NCBIfam" id="NF006903">
    <property type="entry name" value="PRK09395.1"/>
    <property type="match status" value="1"/>
</dbReference>
<dbReference type="NCBIfam" id="NF009135">
    <property type="entry name" value="PRK12488.1"/>
    <property type="match status" value="1"/>
</dbReference>
<dbReference type="NCBIfam" id="TIGR00813">
    <property type="entry name" value="sss"/>
    <property type="match status" value="1"/>
</dbReference>
<dbReference type="NCBIfam" id="TIGR02711">
    <property type="entry name" value="symport_actP"/>
    <property type="match status" value="1"/>
</dbReference>
<dbReference type="PANTHER" id="PTHR48086:SF6">
    <property type="entry name" value="CATION_ACETATE SYMPORTER ACTP"/>
    <property type="match status" value="1"/>
</dbReference>
<dbReference type="PANTHER" id="PTHR48086">
    <property type="entry name" value="SODIUM/PROLINE SYMPORTER-RELATED"/>
    <property type="match status" value="1"/>
</dbReference>
<dbReference type="Pfam" id="PF00474">
    <property type="entry name" value="SSF"/>
    <property type="match status" value="1"/>
</dbReference>
<dbReference type="PROSITE" id="PS00456">
    <property type="entry name" value="NA_SOLUT_SYMP_1"/>
    <property type="match status" value="1"/>
</dbReference>
<dbReference type="PROSITE" id="PS00457">
    <property type="entry name" value="NA_SOLUT_SYMP_2"/>
    <property type="match status" value="1"/>
</dbReference>
<dbReference type="PROSITE" id="PS50283">
    <property type="entry name" value="NA_SOLUT_SYMP_3"/>
    <property type="match status" value="1"/>
</dbReference>
<reference key="1">
    <citation type="journal article" date="2009" name="J. Bacteriol.">
        <title>Genomic sequencing reveals regulatory mutations and recombinational events in the widely used MC4100 lineage of Escherichia coli K-12.</title>
        <authorList>
            <person name="Ferenci T."/>
            <person name="Zhou Z."/>
            <person name="Betteridge T."/>
            <person name="Ren Y."/>
            <person name="Liu Y."/>
            <person name="Feng L."/>
            <person name="Reeves P.R."/>
            <person name="Wang L."/>
        </authorList>
    </citation>
    <scope>NUCLEOTIDE SEQUENCE [LARGE SCALE GENOMIC DNA]</scope>
    <source>
        <strain>K12 / MC4100 / BW2952</strain>
    </source>
</reference>